<keyword id="KW-0030">Aminoacyl-tRNA synthetase</keyword>
<keyword id="KW-0067">ATP-binding</keyword>
<keyword id="KW-0963">Cytoplasm</keyword>
<keyword id="KW-0436">Ligase</keyword>
<keyword id="KW-0547">Nucleotide-binding</keyword>
<keyword id="KW-0648">Protein biosynthesis</keyword>
<keyword id="KW-0694">RNA-binding</keyword>
<reference key="1">
    <citation type="journal article" date="2001" name="Lancet">
        <title>Whole genome sequencing of meticillin-resistant Staphylococcus aureus.</title>
        <authorList>
            <person name="Kuroda M."/>
            <person name="Ohta T."/>
            <person name="Uchiyama I."/>
            <person name="Baba T."/>
            <person name="Yuzawa H."/>
            <person name="Kobayashi I."/>
            <person name="Cui L."/>
            <person name="Oguchi A."/>
            <person name="Aoki K."/>
            <person name="Nagai Y."/>
            <person name="Lian J.-Q."/>
            <person name="Ito T."/>
            <person name="Kanamori M."/>
            <person name="Matsumaru H."/>
            <person name="Maruyama A."/>
            <person name="Murakami H."/>
            <person name="Hosoyama A."/>
            <person name="Mizutani-Ui Y."/>
            <person name="Takahashi N.K."/>
            <person name="Sawano T."/>
            <person name="Inoue R."/>
            <person name="Kaito C."/>
            <person name="Sekimizu K."/>
            <person name="Hirakawa H."/>
            <person name="Kuhara S."/>
            <person name="Goto S."/>
            <person name="Yabuzaki J."/>
            <person name="Kanehisa M."/>
            <person name="Yamashita A."/>
            <person name="Oshima K."/>
            <person name="Furuya K."/>
            <person name="Yoshino C."/>
            <person name="Shiba T."/>
            <person name="Hattori M."/>
            <person name="Ogasawara N."/>
            <person name="Hayashi H."/>
            <person name="Hiramatsu K."/>
        </authorList>
    </citation>
    <scope>NUCLEOTIDE SEQUENCE [LARGE SCALE GENOMIC DNA]</scope>
    <source>
        <strain>Mu50 / ATCC 700699</strain>
    </source>
</reference>
<organism>
    <name type="scientific">Staphylococcus aureus (strain Mu50 / ATCC 700699)</name>
    <dbReference type="NCBI Taxonomy" id="158878"/>
    <lineage>
        <taxon>Bacteria</taxon>
        <taxon>Bacillati</taxon>
        <taxon>Bacillota</taxon>
        <taxon>Bacilli</taxon>
        <taxon>Bacillales</taxon>
        <taxon>Staphylococcaceae</taxon>
        <taxon>Staphylococcus</taxon>
    </lineage>
</organism>
<protein>
    <recommendedName>
        <fullName evidence="1">Tyrosine--tRNA ligase</fullName>
        <ecNumber evidence="1">6.1.1.1</ecNumber>
    </recommendedName>
    <alternativeName>
        <fullName evidence="1">Tyrosyl-tRNA synthetase</fullName>
        <shortName evidence="1">TyrRS</shortName>
    </alternativeName>
</protein>
<evidence type="ECO:0000255" key="1">
    <source>
        <dbReference type="HAMAP-Rule" id="MF_02006"/>
    </source>
</evidence>
<accession>Q99TD5</accession>
<gene>
    <name evidence="1" type="primary">tyrS</name>
    <name type="ordered locus">SAV1729</name>
</gene>
<dbReference type="EC" id="6.1.1.1" evidence="1"/>
<dbReference type="EMBL" id="BA000017">
    <property type="protein sequence ID" value="BAB57891.1"/>
    <property type="molecule type" value="Genomic_DNA"/>
</dbReference>
<dbReference type="RefSeq" id="WP_000186029.1">
    <property type="nucleotide sequence ID" value="NC_002758.2"/>
</dbReference>
<dbReference type="SMR" id="Q99TD5"/>
<dbReference type="KEGG" id="sav:SAV1729"/>
<dbReference type="HOGENOM" id="CLU_024003_0_3_9"/>
<dbReference type="PhylomeDB" id="Q99TD5"/>
<dbReference type="Proteomes" id="UP000002481">
    <property type="component" value="Chromosome"/>
</dbReference>
<dbReference type="GO" id="GO:0005829">
    <property type="term" value="C:cytosol"/>
    <property type="evidence" value="ECO:0007669"/>
    <property type="project" value="TreeGrafter"/>
</dbReference>
<dbReference type="GO" id="GO:0005524">
    <property type="term" value="F:ATP binding"/>
    <property type="evidence" value="ECO:0007669"/>
    <property type="project" value="UniProtKB-UniRule"/>
</dbReference>
<dbReference type="GO" id="GO:0003723">
    <property type="term" value="F:RNA binding"/>
    <property type="evidence" value="ECO:0007669"/>
    <property type="project" value="UniProtKB-KW"/>
</dbReference>
<dbReference type="GO" id="GO:0004831">
    <property type="term" value="F:tyrosine-tRNA ligase activity"/>
    <property type="evidence" value="ECO:0007669"/>
    <property type="project" value="UniProtKB-UniRule"/>
</dbReference>
<dbReference type="GO" id="GO:0006437">
    <property type="term" value="P:tyrosyl-tRNA aminoacylation"/>
    <property type="evidence" value="ECO:0007669"/>
    <property type="project" value="UniProtKB-UniRule"/>
</dbReference>
<dbReference type="CDD" id="cd00165">
    <property type="entry name" value="S4"/>
    <property type="match status" value="1"/>
</dbReference>
<dbReference type="CDD" id="cd00395">
    <property type="entry name" value="Tyr_Trp_RS_core"/>
    <property type="match status" value="1"/>
</dbReference>
<dbReference type="FunFam" id="1.10.240.10:FF:000001">
    <property type="entry name" value="Tyrosine--tRNA ligase"/>
    <property type="match status" value="1"/>
</dbReference>
<dbReference type="FunFam" id="3.10.290.10:FF:000012">
    <property type="entry name" value="Tyrosine--tRNA ligase"/>
    <property type="match status" value="1"/>
</dbReference>
<dbReference type="FunFam" id="3.40.50.620:FF:000008">
    <property type="entry name" value="Tyrosine--tRNA ligase"/>
    <property type="match status" value="1"/>
</dbReference>
<dbReference type="Gene3D" id="3.40.50.620">
    <property type="entry name" value="HUPs"/>
    <property type="match status" value="1"/>
</dbReference>
<dbReference type="Gene3D" id="3.10.290.10">
    <property type="entry name" value="RNA-binding S4 domain"/>
    <property type="match status" value="1"/>
</dbReference>
<dbReference type="Gene3D" id="1.10.240.10">
    <property type="entry name" value="Tyrosyl-Transfer RNA Synthetase"/>
    <property type="match status" value="1"/>
</dbReference>
<dbReference type="HAMAP" id="MF_02006">
    <property type="entry name" value="Tyr_tRNA_synth_type1"/>
    <property type="match status" value="1"/>
</dbReference>
<dbReference type="InterPro" id="IPR001412">
    <property type="entry name" value="aa-tRNA-synth_I_CS"/>
</dbReference>
<dbReference type="InterPro" id="IPR002305">
    <property type="entry name" value="aa-tRNA-synth_Ic"/>
</dbReference>
<dbReference type="InterPro" id="IPR014729">
    <property type="entry name" value="Rossmann-like_a/b/a_fold"/>
</dbReference>
<dbReference type="InterPro" id="IPR002942">
    <property type="entry name" value="S4_RNA-bd"/>
</dbReference>
<dbReference type="InterPro" id="IPR036986">
    <property type="entry name" value="S4_RNA-bd_sf"/>
</dbReference>
<dbReference type="InterPro" id="IPR054608">
    <property type="entry name" value="SYY-like_C"/>
</dbReference>
<dbReference type="InterPro" id="IPR002307">
    <property type="entry name" value="Tyr-tRNA-ligase"/>
</dbReference>
<dbReference type="InterPro" id="IPR024088">
    <property type="entry name" value="Tyr-tRNA-ligase_bac-type"/>
</dbReference>
<dbReference type="InterPro" id="IPR024107">
    <property type="entry name" value="Tyr-tRNA-ligase_bac_1"/>
</dbReference>
<dbReference type="NCBIfam" id="TIGR00234">
    <property type="entry name" value="tyrS"/>
    <property type="match status" value="1"/>
</dbReference>
<dbReference type="PANTHER" id="PTHR11766:SF0">
    <property type="entry name" value="TYROSINE--TRNA LIGASE, MITOCHONDRIAL"/>
    <property type="match status" value="1"/>
</dbReference>
<dbReference type="PANTHER" id="PTHR11766">
    <property type="entry name" value="TYROSYL-TRNA SYNTHETASE"/>
    <property type="match status" value="1"/>
</dbReference>
<dbReference type="Pfam" id="PF22421">
    <property type="entry name" value="SYY_C-terminal"/>
    <property type="match status" value="1"/>
</dbReference>
<dbReference type="Pfam" id="PF00579">
    <property type="entry name" value="tRNA-synt_1b"/>
    <property type="match status" value="1"/>
</dbReference>
<dbReference type="PRINTS" id="PR01040">
    <property type="entry name" value="TRNASYNTHTYR"/>
</dbReference>
<dbReference type="SMART" id="SM00363">
    <property type="entry name" value="S4"/>
    <property type="match status" value="1"/>
</dbReference>
<dbReference type="SUPFAM" id="SSF55174">
    <property type="entry name" value="Alpha-L RNA-binding motif"/>
    <property type="match status" value="1"/>
</dbReference>
<dbReference type="SUPFAM" id="SSF52374">
    <property type="entry name" value="Nucleotidylyl transferase"/>
    <property type="match status" value="1"/>
</dbReference>
<dbReference type="PROSITE" id="PS00178">
    <property type="entry name" value="AA_TRNA_LIGASE_I"/>
    <property type="match status" value="1"/>
</dbReference>
<dbReference type="PROSITE" id="PS50889">
    <property type="entry name" value="S4"/>
    <property type="match status" value="1"/>
</dbReference>
<comment type="function">
    <text evidence="1">Catalyzes the attachment of tyrosine to tRNA(Tyr) in a two-step reaction: tyrosine is first activated by ATP to form Tyr-AMP and then transferred to the acceptor end of tRNA(Tyr).</text>
</comment>
<comment type="catalytic activity">
    <reaction evidence="1">
        <text>tRNA(Tyr) + L-tyrosine + ATP = L-tyrosyl-tRNA(Tyr) + AMP + diphosphate + H(+)</text>
        <dbReference type="Rhea" id="RHEA:10220"/>
        <dbReference type="Rhea" id="RHEA-COMP:9706"/>
        <dbReference type="Rhea" id="RHEA-COMP:9707"/>
        <dbReference type="ChEBI" id="CHEBI:15378"/>
        <dbReference type="ChEBI" id="CHEBI:30616"/>
        <dbReference type="ChEBI" id="CHEBI:33019"/>
        <dbReference type="ChEBI" id="CHEBI:58315"/>
        <dbReference type="ChEBI" id="CHEBI:78442"/>
        <dbReference type="ChEBI" id="CHEBI:78536"/>
        <dbReference type="ChEBI" id="CHEBI:456215"/>
        <dbReference type="EC" id="6.1.1.1"/>
    </reaction>
</comment>
<comment type="subunit">
    <text evidence="1">Homodimer.</text>
</comment>
<comment type="subcellular location">
    <subcellularLocation>
        <location evidence="1">Cytoplasm</location>
    </subcellularLocation>
</comment>
<comment type="similarity">
    <text evidence="1">Belongs to the class-I aminoacyl-tRNA synthetase family. TyrS type 1 subfamily.</text>
</comment>
<sequence>MTNVLIEDLKWRGLIYQQTDEQGIEDLLNKEQVTLYCGADPTADSLHIGHLLPFLTLRRFQEHGHRPIVLIGGGTGMIGDPSGKSEERVLQTEEQVDKNIEGISKQMHNIFEFGTDHGAVLVNNRDWLGQISLISFLRDYGKHVGVNYMLGKDSIQSRLEHGISYTEFTYTILQAIDFGHLNRELNCKIQVGGSDQWGNITSGIELMRRMYGQTDAYGLTIPLVTKSDGKKFGKSESGAVWLDAEKTSPYEFYQFWINQSDEDVIKFLKYFTFLGKEEIDRLEQSKNEAPHLREAQKTLAEEVTKFIHGEDALNDAIRISQALFSGDLKSLSAKELKDGFKDVPQVTLSNDTTNIVEVLIETGISPSKRQAREDVNNGAIYINGERQQDVNYALAPEDKIDGEFTIIRRGKKKYFMVNYQ</sequence>
<proteinExistence type="inferred from homology"/>
<name>SYY_STAAM</name>
<feature type="chain" id="PRO_0000234776" description="Tyrosine--tRNA ligase">
    <location>
        <begin position="1"/>
        <end position="420"/>
    </location>
</feature>
<feature type="domain" description="S4 RNA-binding" evidence="1">
    <location>
        <begin position="353"/>
        <end position="420"/>
    </location>
</feature>
<feature type="short sequence motif" description="'HIGH' region">
    <location>
        <begin position="41"/>
        <end position="50"/>
    </location>
</feature>
<feature type="short sequence motif" description="'KMSKS' region">
    <location>
        <begin position="231"/>
        <end position="235"/>
    </location>
</feature>
<feature type="binding site" evidence="1">
    <location>
        <position position="36"/>
    </location>
    <ligand>
        <name>L-tyrosine</name>
        <dbReference type="ChEBI" id="CHEBI:58315"/>
    </ligand>
</feature>
<feature type="binding site" evidence="1">
    <location>
        <position position="170"/>
    </location>
    <ligand>
        <name>L-tyrosine</name>
        <dbReference type="ChEBI" id="CHEBI:58315"/>
    </ligand>
</feature>
<feature type="binding site" evidence="1">
    <location>
        <position position="174"/>
    </location>
    <ligand>
        <name>L-tyrosine</name>
        <dbReference type="ChEBI" id="CHEBI:58315"/>
    </ligand>
</feature>
<feature type="binding site" evidence="1">
    <location>
        <position position="234"/>
    </location>
    <ligand>
        <name>ATP</name>
        <dbReference type="ChEBI" id="CHEBI:30616"/>
    </ligand>
</feature>